<comment type="function">
    <text evidence="2">Catalyzes the specific phosphorylation of the 3-hydroxyl group of shikimic acid using ATP as a cosubstrate.</text>
</comment>
<comment type="catalytic activity">
    <reaction evidence="2">
        <text>shikimate + ATP = 3-phosphoshikimate + ADP + H(+)</text>
        <dbReference type="Rhea" id="RHEA:13121"/>
        <dbReference type="ChEBI" id="CHEBI:15378"/>
        <dbReference type="ChEBI" id="CHEBI:30616"/>
        <dbReference type="ChEBI" id="CHEBI:36208"/>
        <dbReference type="ChEBI" id="CHEBI:145989"/>
        <dbReference type="ChEBI" id="CHEBI:456216"/>
        <dbReference type="EC" id="2.7.1.71"/>
    </reaction>
</comment>
<comment type="cofactor">
    <cofactor evidence="2">
        <name>Mg(2+)</name>
        <dbReference type="ChEBI" id="CHEBI:18420"/>
    </cofactor>
    <text evidence="2">Binds 1 Mg(2+) ion per subunit.</text>
</comment>
<comment type="pathway">
    <text evidence="2">Metabolic intermediate biosynthesis; chorismate biosynthesis; chorismate from D-erythrose 4-phosphate and phosphoenolpyruvate: step 5/7.</text>
</comment>
<comment type="subunit">
    <text evidence="2">Monomer.</text>
</comment>
<comment type="subcellular location">
    <subcellularLocation>
        <location evidence="2">Cytoplasm</location>
    </subcellularLocation>
</comment>
<comment type="similarity">
    <text evidence="2">Belongs to the shikimate kinase family.</text>
</comment>
<comment type="sequence caution" evidence="3">
    <conflict type="erroneous initiation">
        <sequence resource="EMBL-CDS" id="AAN82598"/>
    </conflict>
</comment>
<accession>P0A6D8</accession>
<accession>P24167</accession>
<accession>P78113</accession>
<accession>Q8X4S0</accession>
<feature type="initiator methionine" description="Removed" evidence="1">
    <location>
        <position position="1"/>
    </location>
</feature>
<feature type="chain" id="PRO_0000192381" description="Shikimate kinase 1">
    <location>
        <begin position="2"/>
        <end position="173"/>
    </location>
</feature>
<feature type="binding site" evidence="2">
    <location>
        <begin position="14"/>
        <end position="19"/>
    </location>
    <ligand>
        <name>ATP</name>
        <dbReference type="ChEBI" id="CHEBI:30616"/>
    </ligand>
</feature>
<feature type="binding site" evidence="2">
    <location>
        <position position="18"/>
    </location>
    <ligand>
        <name>Mg(2+)</name>
        <dbReference type="ChEBI" id="CHEBI:18420"/>
    </ligand>
</feature>
<feature type="binding site" evidence="2">
    <location>
        <position position="36"/>
    </location>
    <ligand>
        <name>substrate</name>
    </ligand>
</feature>
<feature type="binding site" evidence="2">
    <location>
        <position position="60"/>
    </location>
    <ligand>
        <name>substrate</name>
    </ligand>
</feature>
<feature type="binding site" evidence="2">
    <location>
        <position position="82"/>
    </location>
    <ligand>
        <name>substrate</name>
    </ligand>
</feature>
<feature type="binding site" evidence="2">
    <location>
        <position position="120"/>
    </location>
    <ligand>
        <name>ATP</name>
        <dbReference type="ChEBI" id="CHEBI:30616"/>
    </ligand>
</feature>
<feature type="binding site" evidence="2">
    <location>
        <position position="140"/>
    </location>
    <ligand>
        <name>substrate</name>
    </ligand>
</feature>
<feature type="binding site" evidence="2">
    <location>
        <position position="157"/>
    </location>
    <ligand>
        <name>ATP</name>
        <dbReference type="ChEBI" id="CHEBI:30616"/>
    </ligand>
</feature>
<protein>
    <recommendedName>
        <fullName evidence="2">Shikimate kinase 1</fullName>
        <shortName evidence="2">SK 1</shortName>
        <ecNumber evidence="2">2.7.1.71</ecNumber>
    </recommendedName>
</protein>
<evidence type="ECO:0000250" key="1"/>
<evidence type="ECO:0000255" key="2">
    <source>
        <dbReference type="HAMAP-Rule" id="MF_00109"/>
    </source>
</evidence>
<evidence type="ECO:0000305" key="3"/>
<dbReference type="EC" id="2.7.1.71" evidence="2"/>
<dbReference type="EMBL" id="AE014075">
    <property type="protein sequence ID" value="AAN82598.1"/>
    <property type="status" value="ALT_INIT"/>
    <property type="molecule type" value="Genomic_DNA"/>
</dbReference>
<dbReference type="RefSeq" id="WP_000818618.1">
    <property type="nucleotide sequence ID" value="NZ_CP051263.1"/>
</dbReference>
<dbReference type="SMR" id="P0A6D8"/>
<dbReference type="STRING" id="199310.c4160"/>
<dbReference type="GeneID" id="93778608"/>
<dbReference type="KEGG" id="ecc:c4160"/>
<dbReference type="eggNOG" id="COG0703">
    <property type="taxonomic scope" value="Bacteria"/>
</dbReference>
<dbReference type="HOGENOM" id="CLU_057607_2_2_6"/>
<dbReference type="UniPathway" id="UPA00053">
    <property type="reaction ID" value="UER00088"/>
</dbReference>
<dbReference type="Proteomes" id="UP000001410">
    <property type="component" value="Chromosome"/>
</dbReference>
<dbReference type="GO" id="GO:0005829">
    <property type="term" value="C:cytosol"/>
    <property type="evidence" value="ECO:0007669"/>
    <property type="project" value="TreeGrafter"/>
</dbReference>
<dbReference type="GO" id="GO:0005524">
    <property type="term" value="F:ATP binding"/>
    <property type="evidence" value="ECO:0007669"/>
    <property type="project" value="UniProtKB-UniRule"/>
</dbReference>
<dbReference type="GO" id="GO:0000287">
    <property type="term" value="F:magnesium ion binding"/>
    <property type="evidence" value="ECO:0007669"/>
    <property type="project" value="UniProtKB-UniRule"/>
</dbReference>
<dbReference type="GO" id="GO:0004765">
    <property type="term" value="F:shikimate kinase activity"/>
    <property type="evidence" value="ECO:0007669"/>
    <property type="project" value="UniProtKB-UniRule"/>
</dbReference>
<dbReference type="GO" id="GO:0008652">
    <property type="term" value="P:amino acid biosynthetic process"/>
    <property type="evidence" value="ECO:0007669"/>
    <property type="project" value="UniProtKB-KW"/>
</dbReference>
<dbReference type="GO" id="GO:0009073">
    <property type="term" value="P:aromatic amino acid family biosynthetic process"/>
    <property type="evidence" value="ECO:0007669"/>
    <property type="project" value="UniProtKB-KW"/>
</dbReference>
<dbReference type="GO" id="GO:0009423">
    <property type="term" value="P:chorismate biosynthetic process"/>
    <property type="evidence" value="ECO:0007669"/>
    <property type="project" value="UniProtKB-UniRule"/>
</dbReference>
<dbReference type="CDD" id="cd00464">
    <property type="entry name" value="SK"/>
    <property type="match status" value="1"/>
</dbReference>
<dbReference type="FunFam" id="3.40.50.300:FF:000099">
    <property type="entry name" value="Shikimate kinase 1"/>
    <property type="match status" value="1"/>
</dbReference>
<dbReference type="Gene3D" id="3.40.50.300">
    <property type="entry name" value="P-loop containing nucleotide triphosphate hydrolases"/>
    <property type="match status" value="1"/>
</dbReference>
<dbReference type="HAMAP" id="MF_00109">
    <property type="entry name" value="Shikimate_kinase"/>
    <property type="match status" value="1"/>
</dbReference>
<dbReference type="InterPro" id="IPR027417">
    <property type="entry name" value="P-loop_NTPase"/>
</dbReference>
<dbReference type="InterPro" id="IPR031322">
    <property type="entry name" value="Shikimate/glucono_kinase"/>
</dbReference>
<dbReference type="InterPro" id="IPR000623">
    <property type="entry name" value="Shikimate_kinase/TSH1"/>
</dbReference>
<dbReference type="InterPro" id="IPR023000">
    <property type="entry name" value="Shikimate_kinase_CS"/>
</dbReference>
<dbReference type="NCBIfam" id="NF003456">
    <property type="entry name" value="PRK05057.1"/>
    <property type="match status" value="1"/>
</dbReference>
<dbReference type="PANTHER" id="PTHR21087">
    <property type="entry name" value="SHIKIMATE KINASE"/>
    <property type="match status" value="1"/>
</dbReference>
<dbReference type="PANTHER" id="PTHR21087:SF16">
    <property type="entry name" value="SHIKIMATE KINASE 1, CHLOROPLASTIC"/>
    <property type="match status" value="1"/>
</dbReference>
<dbReference type="Pfam" id="PF01202">
    <property type="entry name" value="SKI"/>
    <property type="match status" value="1"/>
</dbReference>
<dbReference type="PRINTS" id="PR01100">
    <property type="entry name" value="SHIKIMTKNASE"/>
</dbReference>
<dbReference type="SUPFAM" id="SSF52540">
    <property type="entry name" value="P-loop containing nucleoside triphosphate hydrolases"/>
    <property type="match status" value="1"/>
</dbReference>
<dbReference type="PROSITE" id="PS01128">
    <property type="entry name" value="SHIKIMATE_KINASE"/>
    <property type="match status" value="1"/>
</dbReference>
<keyword id="KW-0028">Amino-acid biosynthesis</keyword>
<keyword id="KW-0057">Aromatic amino acid biosynthesis</keyword>
<keyword id="KW-0067">ATP-binding</keyword>
<keyword id="KW-0963">Cytoplasm</keyword>
<keyword id="KW-0418">Kinase</keyword>
<keyword id="KW-0460">Magnesium</keyword>
<keyword id="KW-0479">Metal-binding</keyword>
<keyword id="KW-0547">Nucleotide-binding</keyword>
<keyword id="KW-1185">Reference proteome</keyword>
<keyword id="KW-0808">Transferase</keyword>
<name>AROK_ECOL6</name>
<organism>
    <name type="scientific">Escherichia coli O6:H1 (strain CFT073 / ATCC 700928 / UPEC)</name>
    <dbReference type="NCBI Taxonomy" id="199310"/>
    <lineage>
        <taxon>Bacteria</taxon>
        <taxon>Pseudomonadati</taxon>
        <taxon>Pseudomonadota</taxon>
        <taxon>Gammaproteobacteria</taxon>
        <taxon>Enterobacterales</taxon>
        <taxon>Enterobacteriaceae</taxon>
        <taxon>Escherichia</taxon>
    </lineage>
</organism>
<proteinExistence type="inferred from homology"/>
<sequence>MAEKRNIFLVGPMGAGKSTIGRQLAQQLNMEFYDSDQEIEKRTGADVGWVFDLEGEEGFRDREEKVINELTEKQGIVLATGGGSVKSRETRNRLSARGVVVYLETTIEKQLARTQRDKKRPLLHVETPPREVLEALANERNPLYEEIADVTIRTDDQSAKVVANQIIHMLESN</sequence>
<reference key="1">
    <citation type="journal article" date="2002" name="Proc. Natl. Acad. Sci. U.S.A.">
        <title>Extensive mosaic structure revealed by the complete genome sequence of uropathogenic Escherichia coli.</title>
        <authorList>
            <person name="Welch R.A."/>
            <person name="Burland V."/>
            <person name="Plunkett G. III"/>
            <person name="Redford P."/>
            <person name="Roesch P."/>
            <person name="Rasko D."/>
            <person name="Buckles E.L."/>
            <person name="Liou S.-R."/>
            <person name="Boutin A."/>
            <person name="Hackett J."/>
            <person name="Stroud D."/>
            <person name="Mayhew G.F."/>
            <person name="Rose D.J."/>
            <person name="Zhou S."/>
            <person name="Schwartz D.C."/>
            <person name="Perna N.T."/>
            <person name="Mobley H.L.T."/>
            <person name="Donnenberg M.S."/>
            <person name="Blattner F.R."/>
        </authorList>
    </citation>
    <scope>NUCLEOTIDE SEQUENCE [LARGE SCALE GENOMIC DNA]</scope>
    <source>
        <strain>CFT073 / ATCC 700928 / UPEC</strain>
    </source>
</reference>
<gene>
    <name evidence="2" type="primary">aroK</name>
    <name type="ordered locus">c4160</name>
</gene>